<feature type="chain" id="PRO_1000101058" description="Large ribosomal subunit protein bL36">
    <location>
        <begin position="1"/>
        <end position="38"/>
    </location>
</feature>
<name>RL36_PROMH</name>
<sequence length="38" mass="4470">MKVRASVKKMCRNCKIVRRHGHVRVICSVDPKHKQRQG</sequence>
<protein>
    <recommendedName>
        <fullName evidence="1">Large ribosomal subunit protein bL36</fullName>
    </recommendedName>
    <alternativeName>
        <fullName evidence="2">50S ribosomal protein L36</fullName>
    </alternativeName>
</protein>
<organism>
    <name type="scientific">Proteus mirabilis (strain HI4320)</name>
    <dbReference type="NCBI Taxonomy" id="529507"/>
    <lineage>
        <taxon>Bacteria</taxon>
        <taxon>Pseudomonadati</taxon>
        <taxon>Pseudomonadota</taxon>
        <taxon>Gammaproteobacteria</taxon>
        <taxon>Enterobacterales</taxon>
        <taxon>Morganellaceae</taxon>
        <taxon>Proteus</taxon>
    </lineage>
</organism>
<dbReference type="EMBL" id="AM942759">
    <property type="protein sequence ID" value="CAR46424.1"/>
    <property type="molecule type" value="Genomic_DNA"/>
</dbReference>
<dbReference type="RefSeq" id="WP_012368691.1">
    <property type="nucleotide sequence ID" value="NC_010554.1"/>
</dbReference>
<dbReference type="SMR" id="B4F1K5"/>
<dbReference type="EnsemblBacteria" id="CAR46424">
    <property type="protein sequence ID" value="CAR46424"/>
    <property type="gene ID" value="PMI3276"/>
</dbReference>
<dbReference type="GeneID" id="32917081"/>
<dbReference type="KEGG" id="pmr:PMI3276"/>
<dbReference type="eggNOG" id="COG0257">
    <property type="taxonomic scope" value="Bacteria"/>
</dbReference>
<dbReference type="HOGENOM" id="CLU_135723_6_2_6"/>
<dbReference type="Proteomes" id="UP000008319">
    <property type="component" value="Chromosome"/>
</dbReference>
<dbReference type="GO" id="GO:0005737">
    <property type="term" value="C:cytoplasm"/>
    <property type="evidence" value="ECO:0007669"/>
    <property type="project" value="UniProtKB-ARBA"/>
</dbReference>
<dbReference type="GO" id="GO:1990904">
    <property type="term" value="C:ribonucleoprotein complex"/>
    <property type="evidence" value="ECO:0007669"/>
    <property type="project" value="UniProtKB-KW"/>
</dbReference>
<dbReference type="GO" id="GO:0005840">
    <property type="term" value="C:ribosome"/>
    <property type="evidence" value="ECO:0007669"/>
    <property type="project" value="UniProtKB-KW"/>
</dbReference>
<dbReference type="GO" id="GO:0003735">
    <property type="term" value="F:structural constituent of ribosome"/>
    <property type="evidence" value="ECO:0007669"/>
    <property type="project" value="InterPro"/>
</dbReference>
<dbReference type="GO" id="GO:0006412">
    <property type="term" value="P:translation"/>
    <property type="evidence" value="ECO:0007669"/>
    <property type="project" value="UniProtKB-UniRule"/>
</dbReference>
<dbReference type="HAMAP" id="MF_00251">
    <property type="entry name" value="Ribosomal_bL36"/>
    <property type="match status" value="1"/>
</dbReference>
<dbReference type="InterPro" id="IPR000473">
    <property type="entry name" value="Ribosomal_bL36"/>
</dbReference>
<dbReference type="InterPro" id="IPR035977">
    <property type="entry name" value="Ribosomal_bL36_sp"/>
</dbReference>
<dbReference type="NCBIfam" id="TIGR01022">
    <property type="entry name" value="rpmJ_bact"/>
    <property type="match status" value="1"/>
</dbReference>
<dbReference type="PANTHER" id="PTHR42888">
    <property type="entry name" value="50S RIBOSOMAL PROTEIN L36, CHLOROPLASTIC"/>
    <property type="match status" value="1"/>
</dbReference>
<dbReference type="PANTHER" id="PTHR42888:SF1">
    <property type="entry name" value="LARGE RIBOSOMAL SUBUNIT PROTEIN BL36C"/>
    <property type="match status" value="1"/>
</dbReference>
<dbReference type="Pfam" id="PF00444">
    <property type="entry name" value="Ribosomal_L36"/>
    <property type="match status" value="1"/>
</dbReference>
<dbReference type="SUPFAM" id="SSF57840">
    <property type="entry name" value="Ribosomal protein L36"/>
    <property type="match status" value="1"/>
</dbReference>
<dbReference type="PROSITE" id="PS00828">
    <property type="entry name" value="RIBOSOMAL_L36"/>
    <property type="match status" value="1"/>
</dbReference>
<comment type="similarity">
    <text evidence="1">Belongs to the bacterial ribosomal protein bL36 family.</text>
</comment>
<gene>
    <name evidence="1" type="primary">rpmJ</name>
    <name type="ordered locus">PMI3276</name>
</gene>
<accession>B4F1K5</accession>
<reference key="1">
    <citation type="journal article" date="2008" name="J. Bacteriol.">
        <title>Complete genome sequence of uropathogenic Proteus mirabilis, a master of both adherence and motility.</title>
        <authorList>
            <person name="Pearson M.M."/>
            <person name="Sebaihia M."/>
            <person name="Churcher C."/>
            <person name="Quail M.A."/>
            <person name="Seshasayee A.S."/>
            <person name="Luscombe N.M."/>
            <person name="Abdellah Z."/>
            <person name="Arrosmith C."/>
            <person name="Atkin B."/>
            <person name="Chillingworth T."/>
            <person name="Hauser H."/>
            <person name="Jagels K."/>
            <person name="Moule S."/>
            <person name="Mungall K."/>
            <person name="Norbertczak H."/>
            <person name="Rabbinowitsch E."/>
            <person name="Walker D."/>
            <person name="Whithead S."/>
            <person name="Thomson N.R."/>
            <person name="Rather P.N."/>
            <person name="Parkhill J."/>
            <person name="Mobley H.L.T."/>
        </authorList>
    </citation>
    <scope>NUCLEOTIDE SEQUENCE [LARGE SCALE GENOMIC DNA]</scope>
    <source>
        <strain>HI4320</strain>
    </source>
</reference>
<keyword id="KW-1185">Reference proteome</keyword>
<keyword id="KW-0687">Ribonucleoprotein</keyword>
<keyword id="KW-0689">Ribosomal protein</keyword>
<proteinExistence type="inferred from homology"/>
<evidence type="ECO:0000255" key="1">
    <source>
        <dbReference type="HAMAP-Rule" id="MF_00251"/>
    </source>
</evidence>
<evidence type="ECO:0000305" key="2"/>